<organism>
    <name type="scientific">Streptococcus thermophilus (strain ATCC BAA-250 / LMG 18311)</name>
    <dbReference type="NCBI Taxonomy" id="264199"/>
    <lineage>
        <taxon>Bacteria</taxon>
        <taxon>Bacillati</taxon>
        <taxon>Bacillota</taxon>
        <taxon>Bacilli</taxon>
        <taxon>Lactobacillales</taxon>
        <taxon>Streptococcaceae</taxon>
        <taxon>Streptococcus</taxon>
    </lineage>
</organism>
<protein>
    <recommendedName>
        <fullName evidence="1">Endoribonuclease YbeY</fullName>
        <ecNumber evidence="1">3.1.-.-</ecNumber>
    </recommendedName>
</protein>
<accession>Q5M579</accession>
<name>YBEY_STRT2</name>
<reference key="1">
    <citation type="journal article" date="2004" name="Nat. Biotechnol.">
        <title>Complete sequence and comparative genome analysis of the dairy bacterium Streptococcus thermophilus.</title>
        <authorList>
            <person name="Bolotin A."/>
            <person name="Quinquis B."/>
            <person name="Renault P."/>
            <person name="Sorokin A."/>
            <person name="Ehrlich S.D."/>
            <person name="Kulakauskas S."/>
            <person name="Lapidus A."/>
            <person name="Goltsman E."/>
            <person name="Mazur M."/>
            <person name="Pusch G.D."/>
            <person name="Fonstein M."/>
            <person name="Overbeek R."/>
            <person name="Kyprides N."/>
            <person name="Purnelle B."/>
            <person name="Prozzi D."/>
            <person name="Ngui K."/>
            <person name="Masuy D."/>
            <person name="Hancy F."/>
            <person name="Burteau S."/>
            <person name="Boutry M."/>
            <person name="Delcour J."/>
            <person name="Goffeau A."/>
            <person name="Hols P."/>
        </authorList>
    </citation>
    <scope>NUCLEOTIDE SEQUENCE [LARGE SCALE GENOMIC DNA]</scope>
    <source>
        <strain>ATCC BAA-250 / LMG 18311</strain>
    </source>
</reference>
<evidence type="ECO:0000255" key="1">
    <source>
        <dbReference type="HAMAP-Rule" id="MF_00009"/>
    </source>
</evidence>
<keyword id="KW-0963">Cytoplasm</keyword>
<keyword id="KW-0255">Endonuclease</keyword>
<keyword id="KW-0378">Hydrolase</keyword>
<keyword id="KW-0479">Metal-binding</keyword>
<keyword id="KW-0540">Nuclease</keyword>
<keyword id="KW-1185">Reference proteome</keyword>
<keyword id="KW-0690">Ribosome biogenesis</keyword>
<keyword id="KW-0698">rRNA processing</keyword>
<keyword id="KW-0862">Zinc</keyword>
<feature type="chain" id="PRO_0000102547" description="Endoribonuclease YbeY">
    <location>
        <begin position="1"/>
        <end position="165"/>
    </location>
</feature>
<feature type="binding site" evidence="1">
    <location>
        <position position="130"/>
    </location>
    <ligand>
        <name>Zn(2+)</name>
        <dbReference type="ChEBI" id="CHEBI:29105"/>
        <note>catalytic</note>
    </ligand>
</feature>
<feature type="binding site" evidence="1">
    <location>
        <position position="134"/>
    </location>
    <ligand>
        <name>Zn(2+)</name>
        <dbReference type="ChEBI" id="CHEBI:29105"/>
        <note>catalytic</note>
    </ligand>
</feature>
<feature type="binding site" evidence="1">
    <location>
        <position position="140"/>
    </location>
    <ligand>
        <name>Zn(2+)</name>
        <dbReference type="ChEBI" id="CHEBI:29105"/>
        <note>catalytic</note>
    </ligand>
</feature>
<gene>
    <name evidence="1" type="primary">ybeY</name>
    <name type="ordered locus">stu0617</name>
</gene>
<dbReference type="EC" id="3.1.-.-" evidence="1"/>
<dbReference type="EMBL" id="CP000023">
    <property type="protein sequence ID" value="AAV60323.1"/>
    <property type="molecule type" value="Genomic_DNA"/>
</dbReference>
<dbReference type="RefSeq" id="WP_002950224.1">
    <property type="nucleotide sequence ID" value="NC_006448.1"/>
</dbReference>
<dbReference type="SMR" id="Q5M579"/>
<dbReference type="STRING" id="264199.stu0617"/>
<dbReference type="GeneID" id="66898524"/>
<dbReference type="KEGG" id="stl:stu0617"/>
<dbReference type="eggNOG" id="COG0319">
    <property type="taxonomic scope" value="Bacteria"/>
</dbReference>
<dbReference type="HOGENOM" id="CLU_106710_3_0_9"/>
<dbReference type="Proteomes" id="UP000001170">
    <property type="component" value="Chromosome"/>
</dbReference>
<dbReference type="GO" id="GO:0005737">
    <property type="term" value="C:cytoplasm"/>
    <property type="evidence" value="ECO:0007669"/>
    <property type="project" value="UniProtKB-SubCell"/>
</dbReference>
<dbReference type="GO" id="GO:0004222">
    <property type="term" value="F:metalloendopeptidase activity"/>
    <property type="evidence" value="ECO:0007669"/>
    <property type="project" value="InterPro"/>
</dbReference>
<dbReference type="GO" id="GO:0004521">
    <property type="term" value="F:RNA endonuclease activity"/>
    <property type="evidence" value="ECO:0007669"/>
    <property type="project" value="UniProtKB-UniRule"/>
</dbReference>
<dbReference type="GO" id="GO:0008270">
    <property type="term" value="F:zinc ion binding"/>
    <property type="evidence" value="ECO:0007669"/>
    <property type="project" value="UniProtKB-UniRule"/>
</dbReference>
<dbReference type="GO" id="GO:0006364">
    <property type="term" value="P:rRNA processing"/>
    <property type="evidence" value="ECO:0007669"/>
    <property type="project" value="UniProtKB-UniRule"/>
</dbReference>
<dbReference type="Gene3D" id="3.40.390.30">
    <property type="entry name" value="Metalloproteases ('zincins'), catalytic domain"/>
    <property type="match status" value="1"/>
</dbReference>
<dbReference type="HAMAP" id="MF_00009">
    <property type="entry name" value="Endoribonucl_YbeY"/>
    <property type="match status" value="1"/>
</dbReference>
<dbReference type="InterPro" id="IPR023091">
    <property type="entry name" value="MetalPrtase_cat_dom_sf_prd"/>
</dbReference>
<dbReference type="InterPro" id="IPR002036">
    <property type="entry name" value="YbeY"/>
</dbReference>
<dbReference type="InterPro" id="IPR020549">
    <property type="entry name" value="YbeY_CS"/>
</dbReference>
<dbReference type="NCBIfam" id="TIGR00043">
    <property type="entry name" value="rRNA maturation RNase YbeY"/>
    <property type="match status" value="1"/>
</dbReference>
<dbReference type="PANTHER" id="PTHR46986">
    <property type="entry name" value="ENDORIBONUCLEASE YBEY, CHLOROPLASTIC"/>
    <property type="match status" value="1"/>
</dbReference>
<dbReference type="PANTHER" id="PTHR46986:SF1">
    <property type="entry name" value="ENDORIBONUCLEASE YBEY, CHLOROPLASTIC"/>
    <property type="match status" value="1"/>
</dbReference>
<dbReference type="Pfam" id="PF02130">
    <property type="entry name" value="YbeY"/>
    <property type="match status" value="1"/>
</dbReference>
<dbReference type="SUPFAM" id="SSF55486">
    <property type="entry name" value="Metalloproteases ('zincins'), catalytic domain"/>
    <property type="match status" value="1"/>
</dbReference>
<dbReference type="PROSITE" id="PS01306">
    <property type="entry name" value="UPF0054"/>
    <property type="match status" value="1"/>
</dbReference>
<proteinExistence type="inferred from homology"/>
<comment type="function">
    <text evidence="1">Single strand-specific metallo-endoribonuclease involved in late-stage 70S ribosome quality control and in maturation of the 3' terminus of the 16S rRNA.</text>
</comment>
<comment type="cofactor">
    <cofactor evidence="1">
        <name>Zn(2+)</name>
        <dbReference type="ChEBI" id="CHEBI:29105"/>
    </cofactor>
    <text evidence="1">Binds 1 zinc ion.</text>
</comment>
<comment type="subcellular location">
    <subcellularLocation>
        <location evidence="1">Cytoplasm</location>
    </subcellularLocation>
</comment>
<comment type="similarity">
    <text evidence="1">Belongs to the endoribonuclease YbeY family.</text>
</comment>
<sequence length="165" mass="19208">MYVEMIDETGQVSEEIKKQTLELLDFAAQKLGKKDKEMAVTFVTNERSHELNLEYRDTDRPTDVISLEYKPELDITFDEEDLAENPELAEMMGEFDSYIGELFISIDKAREQAEEYGHSYEREMGFLAVHGFLHINGYDHYTPEEEAEMFGLQEEILTAYGLTRQ</sequence>